<gene>
    <name evidence="1" type="primary">mdtL</name>
    <name type="ordered locus">SPAB_04786</name>
</gene>
<comment type="subcellular location">
    <subcellularLocation>
        <location evidence="1">Cell inner membrane</location>
        <topology evidence="1">Multi-pass membrane protein</topology>
    </subcellularLocation>
</comment>
<comment type="similarity">
    <text evidence="1">Belongs to the major facilitator superfamily. DHA1 family. MdtL (TC 2.A.1.2.22) subfamily.</text>
</comment>
<organism>
    <name type="scientific">Salmonella paratyphi B (strain ATCC BAA-1250 / SPB7)</name>
    <dbReference type="NCBI Taxonomy" id="1016998"/>
    <lineage>
        <taxon>Bacteria</taxon>
        <taxon>Pseudomonadati</taxon>
        <taxon>Pseudomonadota</taxon>
        <taxon>Gammaproteobacteria</taxon>
        <taxon>Enterobacterales</taxon>
        <taxon>Enterobacteriaceae</taxon>
        <taxon>Salmonella</taxon>
    </lineage>
</organism>
<accession>A9MX86</accession>
<feature type="chain" id="PRO_1000087593" description="Multidrug resistance protein MdtL">
    <location>
        <begin position="1"/>
        <end position="395"/>
    </location>
</feature>
<feature type="transmembrane region" description="Helical" evidence="1">
    <location>
        <begin position="4"/>
        <end position="24"/>
    </location>
</feature>
<feature type="transmembrane region" description="Helical" evidence="1">
    <location>
        <begin position="42"/>
        <end position="62"/>
    </location>
</feature>
<feature type="transmembrane region" description="Helical" evidence="1">
    <location>
        <begin position="69"/>
        <end position="89"/>
    </location>
</feature>
<feature type="transmembrane region" description="Helical" evidence="1">
    <location>
        <begin position="93"/>
        <end position="113"/>
    </location>
</feature>
<feature type="transmembrane region" description="Helical" evidence="1">
    <location>
        <begin position="131"/>
        <end position="151"/>
    </location>
</feature>
<feature type="transmembrane region" description="Helical" evidence="1">
    <location>
        <begin position="158"/>
        <end position="178"/>
    </location>
</feature>
<feature type="transmembrane region" description="Helical" evidence="1">
    <location>
        <begin position="217"/>
        <end position="237"/>
    </location>
</feature>
<feature type="transmembrane region" description="Helical" evidence="1">
    <location>
        <begin position="247"/>
        <end position="267"/>
    </location>
</feature>
<feature type="transmembrane region" description="Helical" evidence="1">
    <location>
        <begin position="271"/>
        <end position="291"/>
    </location>
</feature>
<feature type="transmembrane region" description="Helical" evidence="1">
    <location>
        <begin position="295"/>
        <end position="315"/>
    </location>
</feature>
<feature type="transmembrane region" description="Helical" evidence="1">
    <location>
        <begin position="328"/>
        <end position="350"/>
    </location>
</feature>
<feature type="transmembrane region" description="Helical" evidence="1">
    <location>
        <begin position="355"/>
        <end position="377"/>
    </location>
</feature>
<proteinExistence type="inferred from homology"/>
<protein>
    <recommendedName>
        <fullName evidence="1">Multidrug resistance protein MdtL</fullName>
    </recommendedName>
</protein>
<dbReference type="EMBL" id="CP000886">
    <property type="protein sequence ID" value="ABX70097.1"/>
    <property type="molecule type" value="Genomic_DNA"/>
</dbReference>
<dbReference type="RefSeq" id="WP_000819615.1">
    <property type="nucleotide sequence ID" value="NC_010102.1"/>
</dbReference>
<dbReference type="SMR" id="A9MX86"/>
<dbReference type="KEGG" id="spq:SPAB_04786"/>
<dbReference type="PATRIC" id="fig|1016998.12.peg.4502"/>
<dbReference type="HOGENOM" id="CLU_001265_47_1_6"/>
<dbReference type="BioCyc" id="SENT1016998:SPAB_RS19425-MONOMER"/>
<dbReference type="Proteomes" id="UP000008556">
    <property type="component" value="Chromosome"/>
</dbReference>
<dbReference type="GO" id="GO:0005886">
    <property type="term" value="C:plasma membrane"/>
    <property type="evidence" value="ECO:0007669"/>
    <property type="project" value="UniProtKB-SubCell"/>
</dbReference>
<dbReference type="GO" id="GO:0022857">
    <property type="term" value="F:transmembrane transporter activity"/>
    <property type="evidence" value="ECO:0007669"/>
    <property type="project" value="UniProtKB-UniRule"/>
</dbReference>
<dbReference type="CDD" id="cd17320">
    <property type="entry name" value="MFS_MdfA_MDR_like"/>
    <property type="match status" value="1"/>
</dbReference>
<dbReference type="FunFam" id="1.20.1720.10:FF:000003">
    <property type="entry name" value="Multidrug resistance protein MdtL"/>
    <property type="match status" value="1"/>
</dbReference>
<dbReference type="Gene3D" id="1.20.1720.10">
    <property type="entry name" value="Multidrug resistance protein D"/>
    <property type="match status" value="1"/>
</dbReference>
<dbReference type="HAMAP" id="MF_01530">
    <property type="entry name" value="MFS_MdtL"/>
    <property type="match status" value="1"/>
</dbReference>
<dbReference type="InterPro" id="IPR011701">
    <property type="entry name" value="MFS"/>
</dbReference>
<dbReference type="InterPro" id="IPR020846">
    <property type="entry name" value="MFS_dom"/>
</dbReference>
<dbReference type="InterPro" id="IPR036259">
    <property type="entry name" value="MFS_trans_sf"/>
</dbReference>
<dbReference type="InterPro" id="IPR023697">
    <property type="entry name" value="Multidrug-R_MdtL"/>
</dbReference>
<dbReference type="NCBIfam" id="NF007782">
    <property type="entry name" value="PRK10473.1"/>
    <property type="match status" value="1"/>
</dbReference>
<dbReference type="PANTHER" id="PTHR42718">
    <property type="entry name" value="MAJOR FACILITATOR SUPERFAMILY MULTIDRUG TRANSPORTER MFSC"/>
    <property type="match status" value="1"/>
</dbReference>
<dbReference type="PANTHER" id="PTHR42718:SF9">
    <property type="entry name" value="MAJOR FACILITATOR SUPERFAMILY MULTIDRUG TRANSPORTER MFSC"/>
    <property type="match status" value="1"/>
</dbReference>
<dbReference type="Pfam" id="PF07690">
    <property type="entry name" value="MFS_1"/>
    <property type="match status" value="1"/>
</dbReference>
<dbReference type="SUPFAM" id="SSF103473">
    <property type="entry name" value="MFS general substrate transporter"/>
    <property type="match status" value="1"/>
</dbReference>
<dbReference type="PROSITE" id="PS50850">
    <property type="entry name" value="MFS"/>
    <property type="match status" value="1"/>
</dbReference>
<name>MDTL_SALPB</name>
<sequence length="395" mass="41985">MKRFLLCSFALVLLYPAGIDMYLVGLPRIAADLNASEAQLHIAFSVYLAGMATAMLFAGKIADQSGRKPVAIVGALVFMMASLLCSRASEGSLFLSGRFLQGVGAGGCYVVAFAILRDTLDEHRRAKVLSLLNGITCIVPVLAPVVGHLIMLRFPWQSLFYTMSAMGIIVGLLSLFILRETRPARLAPRDLSRSSPAAESLVNRFFVSRLAITTLSVSVILTFVNASPVLLMEVMGFSRGDYAITMALTAGVSMVVSFSTPFALGLFKPRTLMLVSQGLFLTAGVTLSLAHTNTVTLFGLTLICAGFSVGFGVAMSQALGPFSLRAGVASSTLGIAQVCGSSLWIWLAAILGISAMNMLIGILIGCSIVSILLIFSVTPNRSVAEHEEIPYQSRP</sequence>
<reference key="1">
    <citation type="submission" date="2007-11" db="EMBL/GenBank/DDBJ databases">
        <authorList>
            <consortium name="The Salmonella enterica serovar Paratyphi B Genome Sequencing Project"/>
            <person name="McClelland M."/>
            <person name="Sanderson E.K."/>
            <person name="Porwollik S."/>
            <person name="Spieth J."/>
            <person name="Clifton W.S."/>
            <person name="Fulton R."/>
            <person name="Cordes M."/>
            <person name="Wollam A."/>
            <person name="Shah N."/>
            <person name="Pepin K."/>
            <person name="Bhonagiri V."/>
            <person name="Nash W."/>
            <person name="Johnson M."/>
            <person name="Thiruvilangam P."/>
            <person name="Wilson R."/>
        </authorList>
    </citation>
    <scope>NUCLEOTIDE SEQUENCE [LARGE SCALE GENOMIC DNA]</scope>
    <source>
        <strain>ATCC BAA-1250 / SPB7</strain>
    </source>
</reference>
<keyword id="KW-0997">Cell inner membrane</keyword>
<keyword id="KW-1003">Cell membrane</keyword>
<keyword id="KW-0472">Membrane</keyword>
<keyword id="KW-0812">Transmembrane</keyword>
<keyword id="KW-1133">Transmembrane helix</keyword>
<keyword id="KW-0813">Transport</keyword>
<evidence type="ECO:0000255" key="1">
    <source>
        <dbReference type="HAMAP-Rule" id="MF_01530"/>
    </source>
</evidence>